<organism>
    <name type="scientific">Xenopus tropicalis</name>
    <name type="common">Western clawed frog</name>
    <name type="synonym">Silurana tropicalis</name>
    <dbReference type="NCBI Taxonomy" id="8364"/>
    <lineage>
        <taxon>Eukaryota</taxon>
        <taxon>Metazoa</taxon>
        <taxon>Chordata</taxon>
        <taxon>Craniata</taxon>
        <taxon>Vertebrata</taxon>
        <taxon>Euteleostomi</taxon>
        <taxon>Amphibia</taxon>
        <taxon>Batrachia</taxon>
        <taxon>Anura</taxon>
        <taxon>Pipoidea</taxon>
        <taxon>Pipidae</taxon>
        <taxon>Xenopodinae</taxon>
        <taxon>Xenopus</taxon>
        <taxon>Silurana</taxon>
    </lineage>
</organism>
<proteinExistence type="evidence at transcript level"/>
<accession>Q28FA8</accession>
<accession>F6S799</accession>
<gene>
    <name type="primary">cep41</name>
    <name type="synonym">tsga14</name>
    <name type="ORF">TEgg077h17.1</name>
</gene>
<reference key="1">
    <citation type="submission" date="2006-10" db="EMBL/GenBank/DDBJ databases">
        <authorList>
            <consortium name="Sanger Xenopus tropicalis EST/cDNA project"/>
        </authorList>
    </citation>
    <scope>NUCLEOTIDE SEQUENCE [LARGE SCALE MRNA]</scope>
    <source>
        <tissue>Egg</tissue>
    </source>
</reference>
<reference key="2">
    <citation type="journal article" date="2010" name="Science">
        <title>The genome of the Western clawed frog Xenopus tropicalis.</title>
        <authorList>
            <person name="Hellsten U."/>
            <person name="Harland R.M."/>
            <person name="Gilchrist M.J."/>
            <person name="Hendrix D."/>
            <person name="Jurka J."/>
            <person name="Kapitonov V."/>
            <person name="Ovcharenko I."/>
            <person name="Putnam N.H."/>
            <person name="Shu S."/>
            <person name="Taher L."/>
            <person name="Blitz I.L."/>
            <person name="Blumberg B."/>
            <person name="Dichmann D.S."/>
            <person name="Dubchak I."/>
            <person name="Amaya E."/>
            <person name="Detter J.C."/>
            <person name="Fletcher R."/>
            <person name="Gerhard D.S."/>
            <person name="Goodstein D."/>
            <person name="Graves T."/>
            <person name="Grigoriev I.V."/>
            <person name="Grimwood J."/>
            <person name="Kawashima T."/>
            <person name="Lindquist E."/>
            <person name="Lucas S.M."/>
            <person name="Mead P.E."/>
            <person name="Mitros T."/>
            <person name="Ogino H."/>
            <person name="Ohta Y."/>
            <person name="Poliakov A.V."/>
            <person name="Pollet N."/>
            <person name="Robert J."/>
            <person name="Salamov A."/>
            <person name="Sater A.K."/>
            <person name="Schmutz J."/>
            <person name="Terry A."/>
            <person name="Vize P.D."/>
            <person name="Warren W.C."/>
            <person name="Wells D."/>
            <person name="Wills A."/>
            <person name="Wilson R.K."/>
            <person name="Zimmerman L.B."/>
            <person name="Zorn A.M."/>
            <person name="Grainger R."/>
            <person name="Grammer T."/>
            <person name="Khokha M.K."/>
            <person name="Richardson P.M."/>
            <person name="Rokhsar D.S."/>
        </authorList>
    </citation>
    <scope>NUCLEOTIDE SEQUENCE [LARGE SCALE GENOMIC DNA]</scope>
</reference>
<reference key="3">
    <citation type="submission" date="2008-01" db="EMBL/GenBank/DDBJ databases">
        <authorList>
            <consortium name="NIH - Xenopus Gene Collection (XGC) project"/>
        </authorList>
    </citation>
    <scope>NUCLEOTIDE SEQUENCE [LARGE SCALE MRNA]</scope>
    <source>
        <tissue>Embryo</tissue>
    </source>
</reference>
<dbReference type="EMBL" id="CR762062">
    <property type="protein sequence ID" value="CAJ81928.1"/>
    <property type="molecule type" value="mRNA"/>
</dbReference>
<dbReference type="EMBL" id="AAMC01005674">
    <property type="status" value="NOT_ANNOTATED_CDS"/>
    <property type="molecule type" value="Genomic_DNA"/>
</dbReference>
<dbReference type="EMBL" id="AAMC01005675">
    <property type="status" value="NOT_ANNOTATED_CDS"/>
    <property type="molecule type" value="Genomic_DNA"/>
</dbReference>
<dbReference type="EMBL" id="AAMC01005676">
    <property type="status" value="NOT_ANNOTATED_CDS"/>
    <property type="molecule type" value="Genomic_DNA"/>
</dbReference>
<dbReference type="EMBL" id="BC158166">
    <property type="protein sequence ID" value="AAI58167.1"/>
    <property type="molecule type" value="mRNA"/>
</dbReference>
<dbReference type="RefSeq" id="NP_001016937.1">
    <property type="nucleotide sequence ID" value="NM_001016937.2"/>
</dbReference>
<dbReference type="SMR" id="Q28FA8"/>
<dbReference type="FunCoup" id="Q28FA8">
    <property type="interactions" value="776"/>
</dbReference>
<dbReference type="STRING" id="8364.ENSXETP00000054787"/>
<dbReference type="PaxDb" id="8364-ENSXETP00000060664"/>
<dbReference type="GeneID" id="549691"/>
<dbReference type="KEGG" id="xtr:549691"/>
<dbReference type="AGR" id="Xenbase:XB-GENE-980648"/>
<dbReference type="CTD" id="95681"/>
<dbReference type="Xenbase" id="XB-GENE-980648">
    <property type="gene designation" value="cep41"/>
</dbReference>
<dbReference type="eggNOG" id="ENOG502QR8A">
    <property type="taxonomic scope" value="Eukaryota"/>
</dbReference>
<dbReference type="InParanoid" id="Q28FA8"/>
<dbReference type="OMA" id="TMCQRGF"/>
<dbReference type="OrthoDB" id="70250at2759"/>
<dbReference type="Reactome" id="R-XTR-2565942">
    <property type="pathway name" value="Regulation of PLK1 Activity at G2/M Transition"/>
</dbReference>
<dbReference type="Reactome" id="R-XTR-380259">
    <property type="pathway name" value="Loss of Nlp from mitotic centrosomes"/>
</dbReference>
<dbReference type="Reactome" id="R-XTR-380270">
    <property type="pathway name" value="Recruitment of mitotic centrosome proteins and complexes"/>
</dbReference>
<dbReference type="Reactome" id="R-XTR-380320">
    <property type="pathway name" value="Recruitment of NuMA to mitotic centrosomes"/>
</dbReference>
<dbReference type="Reactome" id="R-XTR-5620912">
    <property type="pathway name" value="Anchoring of the basal body to the plasma membrane"/>
</dbReference>
<dbReference type="Reactome" id="R-XTR-8854518">
    <property type="pathway name" value="AURKA Activation by TPX2"/>
</dbReference>
<dbReference type="Proteomes" id="UP000008143">
    <property type="component" value="Chromosome 3"/>
</dbReference>
<dbReference type="GO" id="GO:0005814">
    <property type="term" value="C:centriole"/>
    <property type="evidence" value="ECO:0000250"/>
    <property type="project" value="UniProtKB"/>
</dbReference>
<dbReference type="GO" id="GO:0005813">
    <property type="term" value="C:centrosome"/>
    <property type="evidence" value="ECO:0007669"/>
    <property type="project" value="UniProtKB-SubCell"/>
</dbReference>
<dbReference type="GO" id="GO:0036064">
    <property type="term" value="C:ciliary basal body"/>
    <property type="evidence" value="ECO:0000250"/>
    <property type="project" value="UniProtKB"/>
</dbReference>
<dbReference type="GO" id="GO:0005929">
    <property type="term" value="C:cilium"/>
    <property type="evidence" value="ECO:0000250"/>
    <property type="project" value="UniProtKB"/>
</dbReference>
<dbReference type="GO" id="GO:0005737">
    <property type="term" value="C:cytoplasm"/>
    <property type="evidence" value="ECO:0007669"/>
    <property type="project" value="UniProtKB-KW"/>
</dbReference>
<dbReference type="GO" id="GO:0060271">
    <property type="term" value="P:cilium assembly"/>
    <property type="evidence" value="ECO:0000250"/>
    <property type="project" value="UniProtKB"/>
</dbReference>
<dbReference type="GO" id="GO:0018095">
    <property type="term" value="P:protein polyglutamylation"/>
    <property type="evidence" value="ECO:0000250"/>
    <property type="project" value="UniProtKB"/>
</dbReference>
<dbReference type="GO" id="GO:0015031">
    <property type="term" value="P:protein transport"/>
    <property type="evidence" value="ECO:0007669"/>
    <property type="project" value="UniProtKB-KW"/>
</dbReference>
<dbReference type="CDD" id="cd00158">
    <property type="entry name" value="RHOD"/>
    <property type="match status" value="1"/>
</dbReference>
<dbReference type="FunFam" id="3.40.250.10:FF:000012">
    <property type="entry name" value="Centrosomal protein of 41 kDa"/>
    <property type="match status" value="1"/>
</dbReference>
<dbReference type="Gene3D" id="3.40.250.10">
    <property type="entry name" value="Rhodanese-like domain"/>
    <property type="match status" value="1"/>
</dbReference>
<dbReference type="InterPro" id="IPR051889">
    <property type="entry name" value="CEP41"/>
</dbReference>
<dbReference type="InterPro" id="IPR001763">
    <property type="entry name" value="Rhodanese-like_dom"/>
</dbReference>
<dbReference type="InterPro" id="IPR036873">
    <property type="entry name" value="Rhodanese-like_dom_sf"/>
</dbReference>
<dbReference type="PANTHER" id="PTHR44390">
    <property type="entry name" value="CENTROSOMAL PROTEIN OF 41 KDA"/>
    <property type="match status" value="1"/>
</dbReference>
<dbReference type="PANTHER" id="PTHR44390:SF1">
    <property type="entry name" value="CENTROSOMAL PROTEIN OF 41 KDA"/>
    <property type="match status" value="1"/>
</dbReference>
<dbReference type="Pfam" id="PF00581">
    <property type="entry name" value="Rhodanese"/>
    <property type="match status" value="1"/>
</dbReference>
<dbReference type="SMART" id="SM00450">
    <property type="entry name" value="RHOD"/>
    <property type="match status" value="1"/>
</dbReference>
<dbReference type="SUPFAM" id="SSF52821">
    <property type="entry name" value="Rhodanese/Cell cycle control phosphatase"/>
    <property type="match status" value="1"/>
</dbReference>
<dbReference type="PROSITE" id="PS50206">
    <property type="entry name" value="RHODANESE_3"/>
    <property type="match status" value="1"/>
</dbReference>
<sequence>MSAKRSIGDSEILKKRIPQNLKYQHIKTRLDTGNSMTKYLEKIEEIKKNYRYKKDELFKRIKVTTFAQLVLQVASVSEERESGEMTTDELQRLEDNSSVISDTEFLTDRTNGKGSPVNDSKSPIQFIDSERGEECIHTSRSTLQSVISGVGELDLGNQADKKKESLQSSSALDKPYEDCPFLLLDVRDRDSYDQCHVVGAKNYPVAMLSRTMNPFTPEILEYRNAHGKIIILYDEDERIASQAATTMCERGFENLFMLSGGLKVISQKFPQGLTTGSFPVTCLVPPTQMKSALKRTPKDPIVPAEDKWRFSSQDLEMIENHLENMLMSTSTPSRLRMDSRNSKVPSSASSARSQSSTSSHSKPWK</sequence>
<name>CEP41_XENTR</name>
<feature type="chain" id="PRO_0000416270" description="Centrosomal protein of 41 kDa">
    <location>
        <begin position="1"/>
        <end position="365"/>
    </location>
</feature>
<feature type="domain" description="Rhodanese" evidence="2">
    <location>
        <begin position="177"/>
        <end position="274"/>
    </location>
</feature>
<feature type="region of interest" description="Disordered" evidence="3">
    <location>
        <begin position="327"/>
        <end position="365"/>
    </location>
</feature>
<feature type="compositionally biased region" description="Low complexity" evidence="3">
    <location>
        <begin position="342"/>
        <end position="365"/>
    </location>
</feature>
<evidence type="ECO:0000250" key="1"/>
<evidence type="ECO:0000255" key="2">
    <source>
        <dbReference type="PROSITE-ProRule" id="PRU00173"/>
    </source>
</evidence>
<evidence type="ECO:0000256" key="3">
    <source>
        <dbReference type="SAM" id="MobiDB-lite"/>
    </source>
</evidence>
<evidence type="ECO:0000305" key="4"/>
<comment type="function">
    <text evidence="1">Required during ciliogenesis for tubulin glutamylation in cilium. Probably acts by participating in the transport of tubulin polyglutamylases between the basal body and the cilium (By similarity).</text>
</comment>
<comment type="subcellular location">
    <subcellularLocation>
        <location evidence="1">Cytoplasm</location>
        <location evidence="1">Cytoskeleton</location>
        <location evidence="1">Microtubule organizing center</location>
        <location evidence="1">Centrosome</location>
    </subcellularLocation>
    <subcellularLocation>
        <location evidence="1">Cell projection</location>
        <location evidence="1">Cilium</location>
    </subcellularLocation>
    <subcellularLocation>
        <location evidence="1">Cytoplasm</location>
        <location evidence="1">Cytoskeleton</location>
        <location evidence="1">Cilium basal body</location>
    </subcellularLocation>
    <text evidence="1">Localizes mainly to the cilium basal body and in primary cilia.</text>
</comment>
<comment type="similarity">
    <text evidence="4">Belongs to the CEP41 family.</text>
</comment>
<protein>
    <recommendedName>
        <fullName>Centrosomal protein of 41 kDa</fullName>
        <shortName>Cep41</shortName>
    </recommendedName>
    <alternativeName>
        <fullName>Testis-specific gene A14 protein</fullName>
    </alternativeName>
</protein>
<keyword id="KW-0966">Cell projection</keyword>
<keyword id="KW-1186">Ciliopathy</keyword>
<keyword id="KW-0969">Cilium</keyword>
<keyword id="KW-0970">Cilium biogenesis/degradation</keyword>
<keyword id="KW-0963">Cytoplasm</keyword>
<keyword id="KW-0206">Cytoskeleton</keyword>
<keyword id="KW-0653">Protein transport</keyword>
<keyword id="KW-1185">Reference proteome</keyword>
<keyword id="KW-0813">Transport</keyword>